<protein>
    <recommendedName>
        <fullName evidence="1">Large ribosomal subunit protein bL25</fullName>
    </recommendedName>
    <alternativeName>
        <fullName evidence="3">50S ribosomal protein L25</fullName>
    </alternativeName>
    <alternativeName>
        <fullName evidence="1">General stress protein CTC</fullName>
    </alternativeName>
</protein>
<gene>
    <name evidence="1" type="primary">rplY</name>
    <name evidence="1" type="synonym">ctc</name>
    <name type="ordered locus">Mfla_0677</name>
</gene>
<evidence type="ECO:0000255" key="1">
    <source>
        <dbReference type="HAMAP-Rule" id="MF_01334"/>
    </source>
</evidence>
<evidence type="ECO:0000256" key="2">
    <source>
        <dbReference type="SAM" id="MobiDB-lite"/>
    </source>
</evidence>
<evidence type="ECO:0000305" key="3"/>
<feature type="chain" id="PRO_1000052904" description="Large ribosomal subunit protein bL25">
    <location>
        <begin position="1"/>
        <end position="207"/>
    </location>
</feature>
<feature type="region of interest" description="Disordered" evidence="2">
    <location>
        <begin position="186"/>
        <end position="207"/>
    </location>
</feature>
<feature type="compositionally biased region" description="Acidic residues" evidence="2">
    <location>
        <begin position="196"/>
        <end position="207"/>
    </location>
</feature>
<sequence>MAITIKATKREGKGTSASRRLRRAGNVPGVVYGGDKEAVSLEFNHKELFLEFRHETFHASILNLEVDGQKEQVVLRDYQLHPVRNTIQHIDFQRVSASEKVHVKVPLHFINADIAPGVKLAGGIVTHILTEADVSCLPKDLPEFIEVDLSNLEAGHSIHLSQIKLPNGVEFVQLAHDNDAAVASISKPRGGAGAEGEADAEGEAAAE</sequence>
<organism>
    <name type="scientific">Methylobacillus flagellatus (strain ATCC 51484 / DSM 6875 / VKM B-1610 / KT)</name>
    <dbReference type="NCBI Taxonomy" id="265072"/>
    <lineage>
        <taxon>Bacteria</taxon>
        <taxon>Pseudomonadati</taxon>
        <taxon>Pseudomonadota</taxon>
        <taxon>Betaproteobacteria</taxon>
        <taxon>Nitrosomonadales</taxon>
        <taxon>Methylophilaceae</taxon>
        <taxon>Methylobacillus</taxon>
    </lineage>
</organism>
<name>RL25_METFK</name>
<dbReference type="EMBL" id="CP000284">
    <property type="protein sequence ID" value="ABE48945.1"/>
    <property type="molecule type" value="Genomic_DNA"/>
</dbReference>
<dbReference type="RefSeq" id="WP_011479042.1">
    <property type="nucleotide sequence ID" value="NC_007947.1"/>
</dbReference>
<dbReference type="SMR" id="Q1H3J2"/>
<dbReference type="STRING" id="265072.Mfla_0677"/>
<dbReference type="KEGG" id="mfa:Mfla_0677"/>
<dbReference type="eggNOG" id="COG1825">
    <property type="taxonomic scope" value="Bacteria"/>
</dbReference>
<dbReference type="HOGENOM" id="CLU_075939_0_1_4"/>
<dbReference type="OrthoDB" id="9806411at2"/>
<dbReference type="Proteomes" id="UP000002440">
    <property type="component" value="Chromosome"/>
</dbReference>
<dbReference type="GO" id="GO:0022625">
    <property type="term" value="C:cytosolic large ribosomal subunit"/>
    <property type="evidence" value="ECO:0007669"/>
    <property type="project" value="TreeGrafter"/>
</dbReference>
<dbReference type="GO" id="GO:0008097">
    <property type="term" value="F:5S rRNA binding"/>
    <property type="evidence" value="ECO:0007669"/>
    <property type="project" value="InterPro"/>
</dbReference>
<dbReference type="GO" id="GO:0003735">
    <property type="term" value="F:structural constituent of ribosome"/>
    <property type="evidence" value="ECO:0007669"/>
    <property type="project" value="InterPro"/>
</dbReference>
<dbReference type="GO" id="GO:0006412">
    <property type="term" value="P:translation"/>
    <property type="evidence" value="ECO:0007669"/>
    <property type="project" value="UniProtKB-UniRule"/>
</dbReference>
<dbReference type="CDD" id="cd00495">
    <property type="entry name" value="Ribosomal_L25_TL5_CTC"/>
    <property type="match status" value="1"/>
</dbReference>
<dbReference type="FunFam" id="2.170.120.20:FF:000003">
    <property type="entry name" value="50S ribosomal protein L25"/>
    <property type="match status" value="1"/>
</dbReference>
<dbReference type="Gene3D" id="2.170.120.20">
    <property type="entry name" value="Ribosomal protein L25, beta domain"/>
    <property type="match status" value="1"/>
</dbReference>
<dbReference type="Gene3D" id="2.40.240.10">
    <property type="entry name" value="Ribosomal Protein L25, Chain P"/>
    <property type="match status" value="1"/>
</dbReference>
<dbReference type="HAMAP" id="MF_01336">
    <property type="entry name" value="Ribosomal_bL25"/>
    <property type="match status" value="1"/>
</dbReference>
<dbReference type="HAMAP" id="MF_01334">
    <property type="entry name" value="Ribosomal_bL25_CTC"/>
    <property type="match status" value="1"/>
</dbReference>
<dbReference type="InterPro" id="IPR020056">
    <property type="entry name" value="Rbsml_bL25/Gln-tRNA_synth_N"/>
</dbReference>
<dbReference type="InterPro" id="IPR011035">
    <property type="entry name" value="Ribosomal_bL25/Gln-tRNA_synth"/>
</dbReference>
<dbReference type="InterPro" id="IPR020057">
    <property type="entry name" value="Ribosomal_bL25_b-dom"/>
</dbReference>
<dbReference type="InterPro" id="IPR037121">
    <property type="entry name" value="Ribosomal_bL25_C"/>
</dbReference>
<dbReference type="InterPro" id="IPR001021">
    <property type="entry name" value="Ribosomal_bL25_long"/>
</dbReference>
<dbReference type="InterPro" id="IPR020055">
    <property type="entry name" value="Ribosomal_bL25_short"/>
</dbReference>
<dbReference type="InterPro" id="IPR029751">
    <property type="entry name" value="Ribosomal_L25_dom"/>
</dbReference>
<dbReference type="InterPro" id="IPR020930">
    <property type="entry name" value="Ribosomal_uL5_bac-type"/>
</dbReference>
<dbReference type="NCBIfam" id="TIGR00731">
    <property type="entry name" value="bL25_bact_ctc"/>
    <property type="match status" value="1"/>
</dbReference>
<dbReference type="NCBIfam" id="NF004128">
    <property type="entry name" value="PRK05618.1-2"/>
    <property type="match status" value="1"/>
</dbReference>
<dbReference type="NCBIfam" id="NF004130">
    <property type="entry name" value="PRK05618.1-5"/>
    <property type="match status" value="1"/>
</dbReference>
<dbReference type="NCBIfam" id="NF004612">
    <property type="entry name" value="PRK05943.1"/>
    <property type="match status" value="1"/>
</dbReference>
<dbReference type="PANTHER" id="PTHR33284">
    <property type="entry name" value="RIBOSOMAL PROTEIN L25/GLN-TRNA SYNTHETASE, ANTI-CODON-BINDING DOMAIN-CONTAINING PROTEIN"/>
    <property type="match status" value="1"/>
</dbReference>
<dbReference type="PANTHER" id="PTHR33284:SF1">
    <property type="entry name" value="RIBOSOMAL PROTEIN L25_GLN-TRNA SYNTHETASE, ANTI-CODON-BINDING DOMAIN-CONTAINING PROTEIN"/>
    <property type="match status" value="1"/>
</dbReference>
<dbReference type="Pfam" id="PF01386">
    <property type="entry name" value="Ribosomal_L25p"/>
    <property type="match status" value="1"/>
</dbReference>
<dbReference type="Pfam" id="PF14693">
    <property type="entry name" value="Ribosomal_TL5_C"/>
    <property type="match status" value="1"/>
</dbReference>
<dbReference type="SUPFAM" id="SSF50715">
    <property type="entry name" value="Ribosomal protein L25-like"/>
    <property type="match status" value="1"/>
</dbReference>
<keyword id="KW-1185">Reference proteome</keyword>
<keyword id="KW-0687">Ribonucleoprotein</keyword>
<keyword id="KW-0689">Ribosomal protein</keyword>
<keyword id="KW-0694">RNA-binding</keyword>
<keyword id="KW-0699">rRNA-binding</keyword>
<proteinExistence type="inferred from homology"/>
<accession>Q1H3J2</accession>
<comment type="function">
    <text evidence="1">This is one of the proteins that binds to the 5S RNA in the ribosome where it forms part of the central protuberance.</text>
</comment>
<comment type="subunit">
    <text evidence="1">Part of the 50S ribosomal subunit; part of the 5S rRNA/L5/L18/L25 subcomplex. Contacts the 5S rRNA. Binds to the 5S rRNA independently of L5 and L18.</text>
</comment>
<comment type="similarity">
    <text evidence="1">Belongs to the bacterial ribosomal protein bL25 family. CTC subfamily.</text>
</comment>
<reference key="1">
    <citation type="submission" date="2006-03" db="EMBL/GenBank/DDBJ databases">
        <title>Complete sequence of Methylobacillus flagellatus KT.</title>
        <authorList>
            <consortium name="US DOE Joint Genome Institute"/>
            <person name="Copeland A."/>
            <person name="Lucas S."/>
            <person name="Lapidus A."/>
            <person name="Barry K."/>
            <person name="Detter J.C."/>
            <person name="Glavina del Rio T."/>
            <person name="Hammon N."/>
            <person name="Israni S."/>
            <person name="Dalin E."/>
            <person name="Tice H."/>
            <person name="Pitluck S."/>
            <person name="Brettin T."/>
            <person name="Bruce D."/>
            <person name="Han C."/>
            <person name="Tapia R."/>
            <person name="Saunders E."/>
            <person name="Gilna P."/>
            <person name="Schmutz J."/>
            <person name="Larimer F."/>
            <person name="Land M."/>
            <person name="Kyrpides N."/>
            <person name="Anderson I."/>
            <person name="Richardson P."/>
        </authorList>
    </citation>
    <scope>NUCLEOTIDE SEQUENCE [LARGE SCALE GENOMIC DNA]</scope>
    <source>
        <strain>ATCC 51484 / DSM 6875 / VKM B-1610 / KT</strain>
    </source>
</reference>